<accession>A0A096LP49</accession>
<accession>Q8N5P7</accession>
<keyword id="KW-0025">Alternative splicing</keyword>
<keyword id="KW-0175">Coiled coil</keyword>
<keyword id="KW-1267">Proteomics identification</keyword>
<keyword id="KW-1185">Reference proteome</keyword>
<gene>
    <name evidence="4" type="primary">CCDC187</name>
</gene>
<organism>
    <name type="scientific">Homo sapiens</name>
    <name type="common">Human</name>
    <dbReference type="NCBI Taxonomy" id="9606"/>
    <lineage>
        <taxon>Eukaryota</taxon>
        <taxon>Metazoa</taxon>
        <taxon>Chordata</taxon>
        <taxon>Craniata</taxon>
        <taxon>Vertebrata</taxon>
        <taxon>Euteleostomi</taxon>
        <taxon>Mammalia</taxon>
        <taxon>Eutheria</taxon>
        <taxon>Euarchontoglires</taxon>
        <taxon>Primates</taxon>
        <taxon>Haplorrhini</taxon>
        <taxon>Catarrhini</taxon>
        <taxon>Hominidae</taxon>
        <taxon>Homo</taxon>
    </lineage>
</organism>
<feature type="chain" id="PRO_0000435396" description="Coiled-coil domain-containing protein 187">
    <location>
        <begin position="1"/>
        <end position="1063"/>
    </location>
</feature>
<feature type="region of interest" description="Disordered" evidence="2">
    <location>
        <begin position="1"/>
        <end position="41"/>
    </location>
</feature>
<feature type="region of interest" description="Disordered" evidence="2">
    <location>
        <begin position="62"/>
        <end position="184"/>
    </location>
</feature>
<feature type="region of interest" description="Disordered" evidence="2">
    <location>
        <begin position="219"/>
        <end position="278"/>
    </location>
</feature>
<feature type="region of interest" description="Disordered" evidence="2">
    <location>
        <begin position="300"/>
        <end position="319"/>
    </location>
</feature>
<feature type="region of interest" description="Disordered" evidence="2">
    <location>
        <begin position="392"/>
        <end position="484"/>
    </location>
</feature>
<feature type="region of interest" description="Disordered" evidence="2">
    <location>
        <begin position="496"/>
        <end position="539"/>
    </location>
</feature>
<feature type="region of interest" description="Disordered" evidence="2">
    <location>
        <begin position="551"/>
        <end position="658"/>
    </location>
</feature>
<feature type="region of interest" description="Disordered" evidence="2">
    <location>
        <begin position="1010"/>
        <end position="1030"/>
    </location>
</feature>
<feature type="coiled-coil region" evidence="1">
    <location>
        <begin position="816"/>
        <end position="851"/>
    </location>
</feature>
<feature type="compositionally biased region" description="Low complexity" evidence="2">
    <location>
        <begin position="111"/>
        <end position="124"/>
    </location>
</feature>
<feature type="compositionally biased region" description="Basic and acidic residues" evidence="2">
    <location>
        <begin position="146"/>
        <end position="160"/>
    </location>
</feature>
<feature type="compositionally biased region" description="Polar residues" evidence="2">
    <location>
        <begin position="163"/>
        <end position="181"/>
    </location>
</feature>
<feature type="compositionally biased region" description="Basic and acidic residues" evidence="2">
    <location>
        <begin position="219"/>
        <end position="233"/>
    </location>
</feature>
<feature type="compositionally biased region" description="Basic and acidic residues" evidence="2">
    <location>
        <begin position="431"/>
        <end position="442"/>
    </location>
</feature>
<feature type="compositionally biased region" description="Basic and acidic residues" evidence="2">
    <location>
        <begin position="472"/>
        <end position="484"/>
    </location>
</feature>
<feature type="compositionally biased region" description="Low complexity" evidence="2">
    <location>
        <begin position="508"/>
        <end position="517"/>
    </location>
</feature>
<feature type="splice variant" id="VSP_058066" description="In isoform 2.">
    <location>
        <begin position="1"/>
        <end position="98"/>
    </location>
</feature>
<feature type="sequence conflict" description="In Ref. 2; AAH31926." evidence="3" ref="2">
    <original>M</original>
    <variation>T</variation>
    <location>
        <position position="190"/>
    </location>
</feature>
<feature type="sequence conflict" description="In Ref. 2; AAH31926." evidence="3" ref="2">
    <original>Y</original>
    <variation>H</variation>
    <location>
        <position position="347"/>
    </location>
</feature>
<feature type="sequence conflict" description="In Ref. 2; AAH31926." evidence="3" ref="2">
    <original>C</original>
    <variation>R</variation>
    <location>
        <position position="413"/>
    </location>
</feature>
<feature type="sequence conflict" description="In Ref. 2; AAH31926." evidence="3" ref="2">
    <original>L</original>
    <variation>P</variation>
    <location>
        <position position="851"/>
    </location>
</feature>
<feature type="sequence conflict" description="In Ref. 2; AAH31926." evidence="3" ref="2">
    <original>D</original>
    <variation>E</variation>
    <location>
        <position position="917"/>
    </location>
</feature>
<dbReference type="EMBL" id="FP326719">
    <property type="status" value="NOT_ANNOTATED_CDS"/>
    <property type="molecule type" value="Genomic_DNA"/>
</dbReference>
<dbReference type="EMBL" id="BC031926">
    <property type="protein sequence ID" value="AAH31926.1"/>
    <property type="status" value="ALT_INIT"/>
    <property type="molecule type" value="mRNA"/>
</dbReference>
<dbReference type="CCDS" id="CCDS78462.1">
    <molecule id="A0A096LP49-2"/>
</dbReference>
<dbReference type="RefSeq" id="NP_001278445.1">
    <molecule id="A0A096LP49-2"/>
    <property type="nucleotide sequence ID" value="NM_001291516.1"/>
</dbReference>
<dbReference type="RefSeq" id="XP_011516985.1">
    <property type="nucleotide sequence ID" value="XM_011518683.2"/>
</dbReference>
<dbReference type="SMR" id="A0A096LP49"/>
<dbReference type="FunCoup" id="A0A096LP49">
    <property type="interactions" value="65"/>
</dbReference>
<dbReference type="IntAct" id="A0A096LP49">
    <property type="interactions" value="1"/>
</dbReference>
<dbReference type="STRING" id="9606.ENSP00000456543"/>
<dbReference type="GlyGen" id="A0A096LP49">
    <property type="glycosylation" value="1 site"/>
</dbReference>
<dbReference type="iPTMnet" id="A0A096LP49"/>
<dbReference type="PhosphoSitePlus" id="A0A096LP49"/>
<dbReference type="BioMuta" id="CCDC187"/>
<dbReference type="jPOST" id="A0A096LP49"/>
<dbReference type="MassIVE" id="A0A096LP49"/>
<dbReference type="PeptideAtlas" id="A0A096LP49"/>
<dbReference type="Antibodypedia" id="58147">
    <property type="antibodies" value="15 antibodies from 8 providers"/>
</dbReference>
<dbReference type="DNASU" id="399693"/>
<dbReference type="Ensembl" id="ENST00000569961.5">
    <molecule id="A0A096LP49-2"/>
    <property type="protein sequence ID" value="ENSP00000456543.1"/>
    <property type="gene ID" value="ENSG00000260220.7"/>
</dbReference>
<dbReference type="Ensembl" id="ENST00000624277.3">
    <molecule id="A0A096LP49-1"/>
    <property type="protein sequence ID" value="ENSP00000485393.1"/>
    <property type="gene ID" value="ENSG00000260220.7"/>
</dbReference>
<dbReference type="GeneID" id="399693"/>
<dbReference type="KEGG" id="hsa:399693"/>
<dbReference type="UCSC" id="uc064xbe.1">
    <molecule id="A0A096LP49-1"/>
    <property type="organism name" value="human"/>
</dbReference>
<dbReference type="AGR" id="HGNC:30942"/>
<dbReference type="CTD" id="399693"/>
<dbReference type="DisGeNET" id="399693"/>
<dbReference type="GeneCards" id="CCDC187"/>
<dbReference type="HGNC" id="HGNC:30942">
    <property type="gene designation" value="CCDC187"/>
</dbReference>
<dbReference type="HPA" id="ENSG00000260220">
    <property type="expression patterns" value="Tissue enhanced (fallopian tube, pituitary gland, testis)"/>
</dbReference>
<dbReference type="neXtProt" id="NX_A0A096LP49"/>
<dbReference type="OpenTargets" id="ENSG00000260220"/>
<dbReference type="VEuPathDB" id="HostDB:ENSG00000260220"/>
<dbReference type="GeneTree" id="ENSGT00530000065015"/>
<dbReference type="InParanoid" id="A0A096LP49"/>
<dbReference type="OrthoDB" id="306254at2759"/>
<dbReference type="PAN-GO" id="A0A096LP49">
    <property type="GO annotations" value="0 GO annotations based on evolutionary models"/>
</dbReference>
<dbReference type="PathwayCommons" id="A0A096LP49"/>
<dbReference type="Reactome" id="R-HSA-9013106">
    <property type="pathway name" value="RHOC GTPase cycle"/>
</dbReference>
<dbReference type="SignaLink" id="A0A096LP49"/>
<dbReference type="BioGRID-ORCS" id="399693">
    <property type="hits" value="0 hits in 32 CRISPR screens"/>
</dbReference>
<dbReference type="GenomeRNAi" id="399693"/>
<dbReference type="Pharos" id="A0A096LP49">
    <property type="development level" value="Tdark"/>
</dbReference>
<dbReference type="PRO" id="PR:A0A096LP49"/>
<dbReference type="Proteomes" id="UP000005640">
    <property type="component" value="Chromosome 9"/>
</dbReference>
<dbReference type="RNAct" id="A0A096LP49">
    <property type="molecule type" value="protein"/>
</dbReference>
<dbReference type="Bgee" id="ENSG00000260220">
    <property type="expression patterns" value="Expressed in right uterine tube and 62 other cell types or tissues"/>
</dbReference>
<dbReference type="ExpressionAtlas" id="A0A096LP49">
    <property type="expression patterns" value="baseline and differential"/>
</dbReference>
<dbReference type="GO" id="GO:0005813">
    <property type="term" value="C:centrosome"/>
    <property type="evidence" value="ECO:0007669"/>
    <property type="project" value="InterPro"/>
</dbReference>
<dbReference type="GO" id="GO:0008017">
    <property type="term" value="F:microtubule binding"/>
    <property type="evidence" value="ECO:0007669"/>
    <property type="project" value="InterPro"/>
</dbReference>
<dbReference type="GO" id="GO:0034453">
    <property type="term" value="P:microtubule anchoring"/>
    <property type="evidence" value="ECO:0007669"/>
    <property type="project" value="InterPro"/>
</dbReference>
<dbReference type="InterPro" id="IPR028750">
    <property type="entry name" value="CEP350/CC187"/>
</dbReference>
<dbReference type="PANTHER" id="PTHR13958">
    <property type="entry name" value="CENTROSOME-ASSOCIATED PROTEIN 350"/>
    <property type="match status" value="1"/>
</dbReference>
<dbReference type="PANTHER" id="PTHR13958:SF5">
    <property type="entry name" value="COILED-COIL DOMAIN-CONTAINING PROTEIN 187"/>
    <property type="match status" value="1"/>
</dbReference>
<comment type="alternative products">
    <event type="alternative splicing"/>
    <isoform>
        <id>A0A096LP49-1</id>
        <name>1</name>
        <sequence type="displayed"/>
    </isoform>
    <isoform>
        <id>A0A096LP49-2</id>
        <name>2</name>
        <sequence type="described" ref="VSP_058066"/>
    </isoform>
</comment>
<comment type="sequence caution" evidence="3">
    <conflict type="erroneous initiation">
        <sequence resource="EMBL-CDS" id="AAH31926"/>
    </conflict>
    <text>Extended N-terminus.</text>
</comment>
<evidence type="ECO:0000255" key="1"/>
<evidence type="ECO:0000256" key="2">
    <source>
        <dbReference type="SAM" id="MobiDB-lite"/>
    </source>
</evidence>
<evidence type="ECO:0000305" key="3"/>
<evidence type="ECO:0000312" key="4">
    <source>
        <dbReference type="HGNC" id="HGNC:30942"/>
    </source>
</evidence>
<name>CC187_HUMAN</name>
<proteinExistence type="evidence at protein level"/>
<sequence>MPTLVVGTPPTCLGDTPQPCHKNSQRQGPFSHGAPGRAADWKAVAKPRLCAPAAEDDVAALRWPGPSQQPDPPWAAPHVVGSDDLKEPGPWGKACSLPMWSTGPEARDGDSSVSSGRLSCSSGGHDVCVSWKERPPQVLGPQQRPRKSDARLEQLRDKIRAQAWQQGSCASLGTSAPSSASRLHKASTLMLRRKGQEAKNPPPAPECSGFSILSAAERRVEAKASHGQGRELSRVSQHQVPVLREKPKRVKSSSCKREKTPKLPSPRRAAKDKHKDEDSELVGVYAWRKGQALVRSLLGPPPVLRRHHSKDPSRDPALTVDLGDSEKVIAAKCSPVCAQLPDATSAYSDQQVSGNTPSLASFDQPATIQTAMAILQDLRQQIQAGLELAQARKGGQELGPSKRRLQDVAGRGCCRDPNAQSSFSKSPWAMTERKHSSLERARSVHTWEPWSSSTARESCPQRAWGAQGQDRSFQRPESPHERLGHFSQRPWSALAGQACSPQRAWGAQRQGPSSQRPGSPPEKRSPFPQQPWSAVATQPCPRRAWTACETWEDPGPRLRNPLERPSPPAQRPWSSSGVQRAGPQGKGRGIGSPVSAAKHALPRPTGSFPQNPLGKEKDTLRPCPRSRGLLGPSHSSESLREFMRQKAQARRRQALEEKASALRTRELRSRRLQEVYRQQREAVLGRAVPVVSRTTPGIVTFVPSSAQSGGLEASGSLESPVLEWSKVTSGMVLGGQEAPGSFCLCLNRAWNHAETLDPPGMGGPQDGRDAPVLLSASPSLGSLELQDLTTRYLPRGMCIYLDPKEAEHLGTSSSLHLRHKQAQLQALETTAKVLKQRVDSLTAKLQGAEALDTVRDPAVGLLRSCPHSLPAAPTLATPTLATPACPGALGPNWGRGAPGEWVSMQPQPLLPPTYFLDGETLSWGPSWEQQQSVSPRAHCESKPRGFPEEGHVDVKPDKRLQRGVAPFQALSPSAGSSYAGPATLHPIWGSLGLEETPSVGGADSVAPCTPRSCGKGDPADRPWAGWSGGRGIHREHLPLPSTRAWPYGVEKSFSTWRASTPRY</sequence>
<reference key="1">
    <citation type="journal article" date="2004" name="Nature">
        <title>DNA sequence and analysis of human chromosome 9.</title>
        <authorList>
            <person name="Humphray S.J."/>
            <person name="Oliver K."/>
            <person name="Hunt A.R."/>
            <person name="Plumb R.W."/>
            <person name="Loveland J.E."/>
            <person name="Howe K.L."/>
            <person name="Andrews T.D."/>
            <person name="Searle S."/>
            <person name="Hunt S.E."/>
            <person name="Scott C.E."/>
            <person name="Jones M.C."/>
            <person name="Ainscough R."/>
            <person name="Almeida J.P."/>
            <person name="Ambrose K.D."/>
            <person name="Ashwell R.I.S."/>
            <person name="Babbage A.K."/>
            <person name="Babbage S."/>
            <person name="Bagguley C.L."/>
            <person name="Bailey J."/>
            <person name="Banerjee R."/>
            <person name="Barker D.J."/>
            <person name="Barlow K.F."/>
            <person name="Bates K."/>
            <person name="Beasley H."/>
            <person name="Beasley O."/>
            <person name="Bird C.P."/>
            <person name="Bray-Allen S."/>
            <person name="Brown A.J."/>
            <person name="Brown J.Y."/>
            <person name="Burford D."/>
            <person name="Burrill W."/>
            <person name="Burton J."/>
            <person name="Carder C."/>
            <person name="Carter N.P."/>
            <person name="Chapman J.C."/>
            <person name="Chen Y."/>
            <person name="Clarke G."/>
            <person name="Clark S.Y."/>
            <person name="Clee C.M."/>
            <person name="Clegg S."/>
            <person name="Collier R.E."/>
            <person name="Corby N."/>
            <person name="Crosier M."/>
            <person name="Cummings A.T."/>
            <person name="Davies J."/>
            <person name="Dhami P."/>
            <person name="Dunn M."/>
            <person name="Dutta I."/>
            <person name="Dyer L.W."/>
            <person name="Earthrowl M.E."/>
            <person name="Faulkner L."/>
            <person name="Fleming C.J."/>
            <person name="Frankish A."/>
            <person name="Frankland J.A."/>
            <person name="French L."/>
            <person name="Fricker D.G."/>
            <person name="Garner P."/>
            <person name="Garnett J."/>
            <person name="Ghori J."/>
            <person name="Gilbert J.G.R."/>
            <person name="Glison C."/>
            <person name="Grafham D.V."/>
            <person name="Gribble S."/>
            <person name="Griffiths C."/>
            <person name="Griffiths-Jones S."/>
            <person name="Grocock R."/>
            <person name="Guy J."/>
            <person name="Hall R.E."/>
            <person name="Hammond S."/>
            <person name="Harley J.L."/>
            <person name="Harrison E.S.I."/>
            <person name="Hart E.A."/>
            <person name="Heath P.D."/>
            <person name="Henderson C.D."/>
            <person name="Hopkins B.L."/>
            <person name="Howard P.J."/>
            <person name="Howden P.J."/>
            <person name="Huckle E."/>
            <person name="Johnson C."/>
            <person name="Johnson D."/>
            <person name="Joy A.A."/>
            <person name="Kay M."/>
            <person name="Keenan S."/>
            <person name="Kershaw J.K."/>
            <person name="Kimberley A.M."/>
            <person name="King A."/>
            <person name="Knights A."/>
            <person name="Laird G.K."/>
            <person name="Langford C."/>
            <person name="Lawlor S."/>
            <person name="Leongamornlert D.A."/>
            <person name="Leversha M."/>
            <person name="Lloyd C."/>
            <person name="Lloyd D.M."/>
            <person name="Lovell J."/>
            <person name="Martin S."/>
            <person name="Mashreghi-Mohammadi M."/>
            <person name="Matthews L."/>
            <person name="McLaren S."/>
            <person name="McLay K.E."/>
            <person name="McMurray A."/>
            <person name="Milne S."/>
            <person name="Nickerson T."/>
            <person name="Nisbett J."/>
            <person name="Nordsiek G."/>
            <person name="Pearce A.V."/>
            <person name="Peck A.I."/>
            <person name="Porter K.M."/>
            <person name="Pandian R."/>
            <person name="Pelan S."/>
            <person name="Phillimore B."/>
            <person name="Povey S."/>
            <person name="Ramsey Y."/>
            <person name="Rand V."/>
            <person name="Scharfe M."/>
            <person name="Sehra H.K."/>
            <person name="Shownkeen R."/>
            <person name="Sims S.K."/>
            <person name="Skuce C.D."/>
            <person name="Smith M."/>
            <person name="Steward C.A."/>
            <person name="Swarbreck D."/>
            <person name="Sycamore N."/>
            <person name="Tester J."/>
            <person name="Thorpe A."/>
            <person name="Tracey A."/>
            <person name="Tromans A."/>
            <person name="Thomas D.W."/>
            <person name="Wall M."/>
            <person name="Wallis J.M."/>
            <person name="West A.P."/>
            <person name="Whitehead S.L."/>
            <person name="Willey D.L."/>
            <person name="Williams S.A."/>
            <person name="Wilming L."/>
            <person name="Wray P.W."/>
            <person name="Young L."/>
            <person name="Ashurst J.L."/>
            <person name="Coulson A."/>
            <person name="Blocker H."/>
            <person name="Durbin R.M."/>
            <person name="Sulston J.E."/>
            <person name="Hubbard T."/>
            <person name="Jackson M.J."/>
            <person name="Bentley D.R."/>
            <person name="Beck S."/>
            <person name="Rogers J."/>
            <person name="Dunham I."/>
        </authorList>
    </citation>
    <scope>NUCLEOTIDE SEQUENCE [LARGE SCALE GENOMIC DNA]</scope>
</reference>
<reference key="2">
    <citation type="journal article" date="2004" name="Genome Res.">
        <title>The status, quality, and expansion of the NIH full-length cDNA project: the Mammalian Gene Collection (MGC).</title>
        <authorList>
            <consortium name="The MGC Project Team"/>
        </authorList>
    </citation>
    <scope>NUCLEOTIDE SEQUENCE [LARGE SCALE MRNA] (ISOFORM 2)</scope>
    <source>
        <tissue>Testis</tissue>
    </source>
</reference>
<protein>
    <recommendedName>
        <fullName evidence="3">Coiled-coil domain-containing protein 187</fullName>
    </recommendedName>
</protein>